<keyword id="KW-0028">Amino-acid biosynthesis</keyword>
<keyword id="KW-0057">Aromatic amino acid biosynthesis</keyword>
<keyword id="KW-0328">Glycosyltransferase</keyword>
<keyword id="KW-0460">Magnesium</keyword>
<keyword id="KW-0479">Metal-binding</keyword>
<keyword id="KW-0808">Transferase</keyword>
<keyword id="KW-0822">Tryptophan biosynthesis</keyword>
<protein>
    <recommendedName>
        <fullName evidence="1">Anthranilate phosphoribosyltransferase</fullName>
        <ecNumber evidence="1">2.4.2.18</ecNumber>
    </recommendedName>
</protein>
<proteinExistence type="inferred from homology"/>
<dbReference type="EC" id="2.4.2.18" evidence="1"/>
<dbReference type="EMBL" id="CP000350">
    <property type="protein sequence ID" value="ABJ76647.1"/>
    <property type="molecule type" value="Genomic_DNA"/>
</dbReference>
<dbReference type="RefSeq" id="WP_011670602.1">
    <property type="nucleotide sequence ID" value="NC_008510.1"/>
</dbReference>
<dbReference type="SMR" id="Q04R23"/>
<dbReference type="KEGG" id="lbj:LBJ_2157"/>
<dbReference type="HOGENOM" id="CLU_034315_2_1_12"/>
<dbReference type="UniPathway" id="UPA00035">
    <property type="reaction ID" value="UER00041"/>
</dbReference>
<dbReference type="Proteomes" id="UP000000656">
    <property type="component" value="Chromosome 1"/>
</dbReference>
<dbReference type="GO" id="GO:0005829">
    <property type="term" value="C:cytosol"/>
    <property type="evidence" value="ECO:0007669"/>
    <property type="project" value="TreeGrafter"/>
</dbReference>
<dbReference type="GO" id="GO:0004048">
    <property type="term" value="F:anthranilate phosphoribosyltransferase activity"/>
    <property type="evidence" value="ECO:0007669"/>
    <property type="project" value="UniProtKB-UniRule"/>
</dbReference>
<dbReference type="GO" id="GO:0000287">
    <property type="term" value="F:magnesium ion binding"/>
    <property type="evidence" value="ECO:0007669"/>
    <property type="project" value="UniProtKB-UniRule"/>
</dbReference>
<dbReference type="GO" id="GO:0000162">
    <property type="term" value="P:L-tryptophan biosynthetic process"/>
    <property type="evidence" value="ECO:0007669"/>
    <property type="project" value="UniProtKB-UniRule"/>
</dbReference>
<dbReference type="FunFam" id="3.40.1030.10:FF:000002">
    <property type="entry name" value="Anthranilate phosphoribosyltransferase"/>
    <property type="match status" value="1"/>
</dbReference>
<dbReference type="Gene3D" id="3.40.1030.10">
    <property type="entry name" value="Nucleoside phosphorylase/phosphoribosyltransferase catalytic domain"/>
    <property type="match status" value="1"/>
</dbReference>
<dbReference type="Gene3D" id="1.20.970.10">
    <property type="entry name" value="Transferase, Pyrimidine Nucleoside Phosphorylase, Chain C"/>
    <property type="match status" value="1"/>
</dbReference>
<dbReference type="HAMAP" id="MF_00211">
    <property type="entry name" value="TrpD"/>
    <property type="match status" value="1"/>
</dbReference>
<dbReference type="InterPro" id="IPR005940">
    <property type="entry name" value="Anthranilate_Pribosyl_Tfrase"/>
</dbReference>
<dbReference type="InterPro" id="IPR000312">
    <property type="entry name" value="Glycosyl_Trfase_fam3"/>
</dbReference>
<dbReference type="InterPro" id="IPR017459">
    <property type="entry name" value="Glycosyl_Trfase_fam3_N_dom"/>
</dbReference>
<dbReference type="InterPro" id="IPR036320">
    <property type="entry name" value="Glycosyl_Trfase_fam3_N_dom_sf"/>
</dbReference>
<dbReference type="InterPro" id="IPR035902">
    <property type="entry name" value="Nuc_phospho_transferase"/>
</dbReference>
<dbReference type="NCBIfam" id="TIGR01245">
    <property type="entry name" value="trpD"/>
    <property type="match status" value="1"/>
</dbReference>
<dbReference type="PANTHER" id="PTHR43285">
    <property type="entry name" value="ANTHRANILATE PHOSPHORIBOSYLTRANSFERASE"/>
    <property type="match status" value="1"/>
</dbReference>
<dbReference type="PANTHER" id="PTHR43285:SF2">
    <property type="entry name" value="ANTHRANILATE PHOSPHORIBOSYLTRANSFERASE"/>
    <property type="match status" value="1"/>
</dbReference>
<dbReference type="Pfam" id="PF02885">
    <property type="entry name" value="Glycos_trans_3N"/>
    <property type="match status" value="1"/>
</dbReference>
<dbReference type="Pfam" id="PF00591">
    <property type="entry name" value="Glycos_transf_3"/>
    <property type="match status" value="1"/>
</dbReference>
<dbReference type="SUPFAM" id="SSF52418">
    <property type="entry name" value="Nucleoside phosphorylase/phosphoribosyltransferase catalytic domain"/>
    <property type="match status" value="1"/>
</dbReference>
<dbReference type="SUPFAM" id="SSF47648">
    <property type="entry name" value="Nucleoside phosphorylase/phosphoribosyltransferase N-terminal domain"/>
    <property type="match status" value="1"/>
</dbReference>
<accession>Q04R23</accession>
<reference key="1">
    <citation type="journal article" date="2006" name="Proc. Natl. Acad. Sci. U.S.A.">
        <title>Genome reduction in Leptospira borgpetersenii reflects limited transmission potential.</title>
        <authorList>
            <person name="Bulach D.M."/>
            <person name="Zuerner R.L."/>
            <person name="Wilson P."/>
            <person name="Seemann T."/>
            <person name="McGrath A."/>
            <person name="Cullen P.A."/>
            <person name="Davis J."/>
            <person name="Johnson M."/>
            <person name="Kuczek E."/>
            <person name="Alt D.P."/>
            <person name="Peterson-Burch B."/>
            <person name="Coppel R.L."/>
            <person name="Rood J.I."/>
            <person name="Davies J.K."/>
            <person name="Adler B."/>
        </authorList>
    </citation>
    <scope>NUCLEOTIDE SEQUENCE [LARGE SCALE GENOMIC DNA]</scope>
    <source>
        <strain>JB197</strain>
    </source>
</reference>
<comment type="function">
    <text evidence="1">Catalyzes the transfer of the phosphoribosyl group of 5-phosphorylribose-1-pyrophosphate (PRPP) to anthranilate to yield N-(5'-phosphoribosyl)-anthranilate (PRA).</text>
</comment>
<comment type="catalytic activity">
    <reaction evidence="1">
        <text>N-(5-phospho-beta-D-ribosyl)anthranilate + diphosphate = 5-phospho-alpha-D-ribose 1-diphosphate + anthranilate</text>
        <dbReference type="Rhea" id="RHEA:11768"/>
        <dbReference type="ChEBI" id="CHEBI:16567"/>
        <dbReference type="ChEBI" id="CHEBI:18277"/>
        <dbReference type="ChEBI" id="CHEBI:33019"/>
        <dbReference type="ChEBI" id="CHEBI:58017"/>
        <dbReference type="EC" id="2.4.2.18"/>
    </reaction>
</comment>
<comment type="cofactor">
    <cofactor evidence="1">
        <name>Mg(2+)</name>
        <dbReference type="ChEBI" id="CHEBI:18420"/>
    </cofactor>
    <text evidence="1">Binds 2 magnesium ions per monomer.</text>
</comment>
<comment type="pathway">
    <text evidence="1">Amino-acid biosynthesis; L-tryptophan biosynthesis; L-tryptophan from chorismate: step 2/5.</text>
</comment>
<comment type="subunit">
    <text evidence="1">Homodimer.</text>
</comment>
<comment type="similarity">
    <text evidence="1">Belongs to the anthranilate phosphoribosyltransferase family.</text>
</comment>
<organism>
    <name type="scientific">Leptospira borgpetersenii serovar Hardjo-bovis (strain JB197)</name>
    <dbReference type="NCBI Taxonomy" id="355277"/>
    <lineage>
        <taxon>Bacteria</taxon>
        <taxon>Pseudomonadati</taxon>
        <taxon>Spirochaetota</taxon>
        <taxon>Spirochaetia</taxon>
        <taxon>Leptospirales</taxon>
        <taxon>Leptospiraceae</taxon>
        <taxon>Leptospira</taxon>
    </lineage>
</organism>
<sequence length="336" mass="37182">MEPRAIVLKLIEHKHISVEEAEFFMNRVMKGEVSEILLSSFVTAMRAKGESVDEVLGCTLALRKNALKPKTVFPFDLLDTCGTGGDGQGTINVSTLSAITLASLGVKVAKHGNRSVSSHTGSSDILARLGYQTEATQEEVEAHLISRGFTFLFAPMWHPSMKYAGSVRKELGFRTVFNMIGPLSNPFSPQFQIIGVYQPELTELFIKVLQYLGLKRALVCHSRDGLDEFSIFQTTDYTLLENEVISRHSFDPRTLGFSSLKREEVYADSSEHAEVLARRVLNSEPIAGTHAVALNAGAGLFVMGKVKTIEQGYKIAWEALLSGKTRKYFEDLISKE</sequence>
<feature type="chain" id="PRO_1000043022" description="Anthranilate phosphoribosyltransferase">
    <location>
        <begin position="1"/>
        <end position="336"/>
    </location>
</feature>
<feature type="binding site" evidence="1">
    <location>
        <position position="82"/>
    </location>
    <ligand>
        <name>5-phospho-alpha-D-ribose 1-diphosphate</name>
        <dbReference type="ChEBI" id="CHEBI:58017"/>
    </ligand>
</feature>
<feature type="binding site" evidence="1">
    <location>
        <position position="82"/>
    </location>
    <ligand>
        <name>anthranilate</name>
        <dbReference type="ChEBI" id="CHEBI:16567"/>
        <label>1</label>
    </ligand>
</feature>
<feature type="binding site" evidence="1">
    <location>
        <begin position="85"/>
        <end position="86"/>
    </location>
    <ligand>
        <name>5-phospho-alpha-D-ribose 1-diphosphate</name>
        <dbReference type="ChEBI" id="CHEBI:58017"/>
    </ligand>
</feature>
<feature type="binding site" evidence="1">
    <location>
        <position position="90"/>
    </location>
    <ligand>
        <name>5-phospho-alpha-D-ribose 1-diphosphate</name>
        <dbReference type="ChEBI" id="CHEBI:58017"/>
    </ligand>
</feature>
<feature type="binding site" evidence="1">
    <location>
        <begin position="92"/>
        <end position="95"/>
    </location>
    <ligand>
        <name>5-phospho-alpha-D-ribose 1-diphosphate</name>
        <dbReference type="ChEBI" id="CHEBI:58017"/>
    </ligand>
</feature>
<feature type="binding site" evidence="1">
    <location>
        <position position="94"/>
    </location>
    <ligand>
        <name>Mg(2+)</name>
        <dbReference type="ChEBI" id="CHEBI:18420"/>
        <label>1</label>
    </ligand>
</feature>
<feature type="binding site" evidence="1">
    <location>
        <begin position="110"/>
        <end position="118"/>
    </location>
    <ligand>
        <name>5-phospho-alpha-D-ribose 1-diphosphate</name>
        <dbReference type="ChEBI" id="CHEBI:58017"/>
    </ligand>
</feature>
<feature type="binding site" evidence="1">
    <location>
        <position position="113"/>
    </location>
    <ligand>
        <name>anthranilate</name>
        <dbReference type="ChEBI" id="CHEBI:16567"/>
        <label>1</label>
    </ligand>
</feature>
<feature type="binding site" evidence="1">
    <location>
        <position position="122"/>
    </location>
    <ligand>
        <name>5-phospho-alpha-D-ribose 1-diphosphate</name>
        <dbReference type="ChEBI" id="CHEBI:58017"/>
    </ligand>
</feature>
<feature type="binding site" evidence="1">
    <location>
        <position position="168"/>
    </location>
    <ligand>
        <name>anthranilate</name>
        <dbReference type="ChEBI" id="CHEBI:16567"/>
        <label>2</label>
    </ligand>
</feature>
<feature type="binding site" evidence="1">
    <location>
        <position position="227"/>
    </location>
    <ligand>
        <name>Mg(2+)</name>
        <dbReference type="ChEBI" id="CHEBI:18420"/>
        <label>2</label>
    </ligand>
</feature>
<feature type="binding site" evidence="1">
    <location>
        <position position="228"/>
    </location>
    <ligand>
        <name>Mg(2+)</name>
        <dbReference type="ChEBI" id="CHEBI:18420"/>
        <label>1</label>
    </ligand>
</feature>
<feature type="binding site" evidence="1">
    <location>
        <position position="228"/>
    </location>
    <ligand>
        <name>Mg(2+)</name>
        <dbReference type="ChEBI" id="CHEBI:18420"/>
        <label>2</label>
    </ligand>
</feature>
<evidence type="ECO:0000255" key="1">
    <source>
        <dbReference type="HAMAP-Rule" id="MF_00211"/>
    </source>
</evidence>
<name>TRPD_LEPBJ</name>
<gene>
    <name evidence="1" type="primary">trpD</name>
    <name type="ordered locus">LBJ_2157</name>
</gene>